<gene>
    <name evidence="1" type="primary">azoR1</name>
    <name type="ordered locus">lin0620</name>
</gene>
<keyword id="KW-0285">Flavoprotein</keyword>
<keyword id="KW-0288">FMN</keyword>
<keyword id="KW-0520">NAD</keyword>
<keyword id="KW-0560">Oxidoreductase</keyword>
<feature type="chain" id="PRO_0000166338" description="FMN-dependent NADH:quinone oxidoreductase 1">
    <location>
        <begin position="1"/>
        <end position="208"/>
    </location>
</feature>
<feature type="binding site" evidence="1">
    <location>
        <begin position="17"/>
        <end position="19"/>
    </location>
    <ligand>
        <name>FMN</name>
        <dbReference type="ChEBI" id="CHEBI:58210"/>
    </ligand>
</feature>
<comment type="function">
    <text evidence="1">Quinone reductase that provides resistance to thiol-specific stress caused by electrophilic quinones.</text>
</comment>
<comment type="function">
    <text evidence="1">Also exhibits azoreductase activity. Catalyzes the reductive cleavage of the azo bond in aromatic azo compounds to the corresponding amines.</text>
</comment>
<comment type="catalytic activity">
    <reaction evidence="1">
        <text>2 a quinone + NADH + H(+) = 2 a 1,4-benzosemiquinone + NAD(+)</text>
        <dbReference type="Rhea" id="RHEA:65952"/>
        <dbReference type="ChEBI" id="CHEBI:15378"/>
        <dbReference type="ChEBI" id="CHEBI:57540"/>
        <dbReference type="ChEBI" id="CHEBI:57945"/>
        <dbReference type="ChEBI" id="CHEBI:132124"/>
        <dbReference type="ChEBI" id="CHEBI:134225"/>
    </reaction>
</comment>
<comment type="catalytic activity">
    <reaction evidence="1">
        <text>N,N-dimethyl-1,4-phenylenediamine + anthranilate + 2 NAD(+) = 2-(4-dimethylaminophenyl)diazenylbenzoate + 2 NADH + 2 H(+)</text>
        <dbReference type="Rhea" id="RHEA:55872"/>
        <dbReference type="ChEBI" id="CHEBI:15378"/>
        <dbReference type="ChEBI" id="CHEBI:15783"/>
        <dbReference type="ChEBI" id="CHEBI:16567"/>
        <dbReference type="ChEBI" id="CHEBI:57540"/>
        <dbReference type="ChEBI" id="CHEBI:57945"/>
        <dbReference type="ChEBI" id="CHEBI:71579"/>
        <dbReference type="EC" id="1.7.1.17"/>
    </reaction>
</comment>
<comment type="cofactor">
    <cofactor evidence="1">
        <name>FMN</name>
        <dbReference type="ChEBI" id="CHEBI:58210"/>
    </cofactor>
    <text evidence="1">Binds 1 FMN per subunit.</text>
</comment>
<comment type="subunit">
    <text evidence="1">Homodimer.</text>
</comment>
<comment type="similarity">
    <text evidence="1">Belongs to the azoreductase type 1 family.</text>
</comment>
<dbReference type="EC" id="1.6.5.-" evidence="1"/>
<dbReference type="EC" id="1.7.1.17" evidence="1"/>
<dbReference type="EMBL" id="AL596165">
    <property type="protein sequence ID" value="CAC95852.1"/>
    <property type="molecule type" value="Genomic_DNA"/>
</dbReference>
<dbReference type="PIR" id="AD1510">
    <property type="entry name" value="AD1510"/>
</dbReference>
<dbReference type="RefSeq" id="WP_010990516.1">
    <property type="nucleotide sequence ID" value="NC_003212.1"/>
</dbReference>
<dbReference type="SMR" id="Q92E41"/>
<dbReference type="STRING" id="272626.gene:17564946"/>
<dbReference type="GeneID" id="93234068"/>
<dbReference type="KEGG" id="lin:lin0620"/>
<dbReference type="eggNOG" id="COG1182">
    <property type="taxonomic scope" value="Bacteria"/>
</dbReference>
<dbReference type="HOGENOM" id="CLU_088964_3_0_9"/>
<dbReference type="OrthoDB" id="9805013at2"/>
<dbReference type="Proteomes" id="UP000002513">
    <property type="component" value="Chromosome"/>
</dbReference>
<dbReference type="GO" id="GO:0009055">
    <property type="term" value="F:electron transfer activity"/>
    <property type="evidence" value="ECO:0007669"/>
    <property type="project" value="UniProtKB-UniRule"/>
</dbReference>
<dbReference type="GO" id="GO:0010181">
    <property type="term" value="F:FMN binding"/>
    <property type="evidence" value="ECO:0007669"/>
    <property type="project" value="UniProtKB-UniRule"/>
</dbReference>
<dbReference type="GO" id="GO:0016652">
    <property type="term" value="F:oxidoreductase activity, acting on NAD(P)H as acceptor"/>
    <property type="evidence" value="ECO:0007669"/>
    <property type="project" value="UniProtKB-UniRule"/>
</dbReference>
<dbReference type="GO" id="GO:0016655">
    <property type="term" value="F:oxidoreductase activity, acting on NAD(P)H, quinone or similar compound as acceptor"/>
    <property type="evidence" value="ECO:0007669"/>
    <property type="project" value="InterPro"/>
</dbReference>
<dbReference type="Gene3D" id="3.40.50.360">
    <property type="match status" value="1"/>
</dbReference>
<dbReference type="HAMAP" id="MF_01216">
    <property type="entry name" value="Azoreductase_type1"/>
    <property type="match status" value="1"/>
</dbReference>
<dbReference type="InterPro" id="IPR003680">
    <property type="entry name" value="Flavodoxin_fold"/>
</dbReference>
<dbReference type="InterPro" id="IPR029039">
    <property type="entry name" value="Flavoprotein-like_sf"/>
</dbReference>
<dbReference type="InterPro" id="IPR050104">
    <property type="entry name" value="FMN-dep_NADH:Q_OxRdtase_AzoR1"/>
</dbReference>
<dbReference type="InterPro" id="IPR023048">
    <property type="entry name" value="NADH:quinone_OxRdtase_FMN_depd"/>
</dbReference>
<dbReference type="NCBIfam" id="NF010075">
    <property type="entry name" value="PRK13556.1"/>
    <property type="match status" value="1"/>
</dbReference>
<dbReference type="PANTHER" id="PTHR43741">
    <property type="entry name" value="FMN-DEPENDENT NADH-AZOREDUCTASE 1"/>
    <property type="match status" value="1"/>
</dbReference>
<dbReference type="PANTHER" id="PTHR43741:SF4">
    <property type="entry name" value="FMN-DEPENDENT NADH:QUINONE OXIDOREDUCTASE"/>
    <property type="match status" value="1"/>
</dbReference>
<dbReference type="Pfam" id="PF02525">
    <property type="entry name" value="Flavodoxin_2"/>
    <property type="match status" value="1"/>
</dbReference>
<dbReference type="SUPFAM" id="SSF52218">
    <property type="entry name" value="Flavoproteins"/>
    <property type="match status" value="1"/>
</dbReference>
<organism>
    <name type="scientific">Listeria innocua serovar 6a (strain ATCC BAA-680 / CLIP 11262)</name>
    <dbReference type="NCBI Taxonomy" id="272626"/>
    <lineage>
        <taxon>Bacteria</taxon>
        <taxon>Bacillati</taxon>
        <taxon>Bacillota</taxon>
        <taxon>Bacilli</taxon>
        <taxon>Bacillales</taxon>
        <taxon>Listeriaceae</taxon>
        <taxon>Listeria</taxon>
    </lineage>
</organism>
<proteinExistence type="inferred from homology"/>
<sequence length="208" mass="23005">MTNVLFIKANGLPAERSVSVALYEIFLAEYKKSHPDDNVTELDLFEADLPYYDVTMMSGLHKEVAGETLTPEEKRLADIANGYLDQFLAADKIVMAFPLWNFSIPAQFLTYLFYLNQAGKTFKYTANGPIGLVTDKKIALLNARGGIYSDGPLQSFEMSLNYVKNVLAHFGISEPEMVIVEGHNAKPDQAKDIISAGAKEAAELAKIF</sequence>
<protein>
    <recommendedName>
        <fullName evidence="1">FMN-dependent NADH:quinone oxidoreductase 1</fullName>
        <ecNumber evidence="1">1.6.5.-</ecNumber>
    </recommendedName>
    <alternativeName>
        <fullName evidence="1">Azo-dye reductase 1</fullName>
    </alternativeName>
    <alternativeName>
        <fullName evidence="1">FMN-dependent NADH-azo compound oxidoreductase 1</fullName>
    </alternativeName>
    <alternativeName>
        <fullName evidence="1">FMN-dependent NADH-azoreductase 1</fullName>
        <ecNumber evidence="1">1.7.1.17</ecNumber>
    </alternativeName>
</protein>
<reference key="1">
    <citation type="journal article" date="2001" name="Science">
        <title>Comparative genomics of Listeria species.</title>
        <authorList>
            <person name="Glaser P."/>
            <person name="Frangeul L."/>
            <person name="Buchrieser C."/>
            <person name="Rusniok C."/>
            <person name="Amend A."/>
            <person name="Baquero F."/>
            <person name="Berche P."/>
            <person name="Bloecker H."/>
            <person name="Brandt P."/>
            <person name="Chakraborty T."/>
            <person name="Charbit A."/>
            <person name="Chetouani F."/>
            <person name="Couve E."/>
            <person name="de Daruvar A."/>
            <person name="Dehoux P."/>
            <person name="Domann E."/>
            <person name="Dominguez-Bernal G."/>
            <person name="Duchaud E."/>
            <person name="Durant L."/>
            <person name="Dussurget O."/>
            <person name="Entian K.-D."/>
            <person name="Fsihi H."/>
            <person name="Garcia-del Portillo F."/>
            <person name="Garrido P."/>
            <person name="Gautier L."/>
            <person name="Goebel W."/>
            <person name="Gomez-Lopez N."/>
            <person name="Hain T."/>
            <person name="Hauf J."/>
            <person name="Jackson D."/>
            <person name="Jones L.-M."/>
            <person name="Kaerst U."/>
            <person name="Kreft J."/>
            <person name="Kuhn M."/>
            <person name="Kunst F."/>
            <person name="Kurapkat G."/>
            <person name="Madueno E."/>
            <person name="Maitournam A."/>
            <person name="Mata Vicente J."/>
            <person name="Ng E."/>
            <person name="Nedjari H."/>
            <person name="Nordsiek G."/>
            <person name="Novella S."/>
            <person name="de Pablos B."/>
            <person name="Perez-Diaz J.-C."/>
            <person name="Purcell R."/>
            <person name="Remmel B."/>
            <person name="Rose M."/>
            <person name="Schlueter T."/>
            <person name="Simoes N."/>
            <person name="Tierrez A."/>
            <person name="Vazquez-Boland J.-A."/>
            <person name="Voss H."/>
            <person name="Wehland J."/>
            <person name="Cossart P."/>
        </authorList>
    </citation>
    <scope>NUCLEOTIDE SEQUENCE [LARGE SCALE GENOMIC DNA]</scope>
    <source>
        <strain>ATCC BAA-680 / CLIP 11262</strain>
    </source>
</reference>
<accession>Q92E41</accession>
<name>AZOR1_LISIN</name>
<evidence type="ECO:0000255" key="1">
    <source>
        <dbReference type="HAMAP-Rule" id="MF_01216"/>
    </source>
</evidence>